<keyword id="KW-0963">Cytoplasm</keyword>
<keyword id="KW-0968">Cytoplasmic vesicle</keyword>
<keyword id="KW-0256">Endoplasmic reticulum</keyword>
<keyword id="KW-0931">ER-Golgi transport</keyword>
<keyword id="KW-0333">Golgi apparatus</keyword>
<keyword id="KW-0472">Membrane</keyword>
<keyword id="KW-0479">Metal-binding</keyword>
<keyword id="KW-0653">Protein transport</keyword>
<keyword id="KW-1185">Reference proteome</keyword>
<keyword id="KW-0813">Transport</keyword>
<keyword id="KW-0862">Zinc</keyword>
<dbReference type="EMBL" id="CM002242">
    <property type="protein sequence ID" value="EAA30475.1"/>
    <property type="molecule type" value="Genomic_DNA"/>
</dbReference>
<dbReference type="RefSeq" id="XP_959711.1">
    <property type="nucleotide sequence ID" value="XM_954618.2"/>
</dbReference>
<dbReference type="SMR" id="Q7S4P3"/>
<dbReference type="FunCoup" id="Q7S4P3">
    <property type="interactions" value="836"/>
</dbReference>
<dbReference type="STRING" id="367110.Q7S4P3"/>
<dbReference type="PaxDb" id="5141-EFNCRP00000003187"/>
<dbReference type="EnsemblFungi" id="EAA30475">
    <property type="protein sequence ID" value="EAA30475"/>
    <property type="gene ID" value="NCU02391"/>
</dbReference>
<dbReference type="GeneID" id="3875858"/>
<dbReference type="KEGG" id="ncr:NCU02391"/>
<dbReference type="VEuPathDB" id="FungiDB:NCU02391"/>
<dbReference type="HOGENOM" id="CLU_004589_2_1_1"/>
<dbReference type="InParanoid" id="Q7S4P3"/>
<dbReference type="OMA" id="AVECSKQ"/>
<dbReference type="OrthoDB" id="49016at2759"/>
<dbReference type="Proteomes" id="UP000001805">
    <property type="component" value="Chromosome 7, Linkage Group VII"/>
</dbReference>
<dbReference type="GO" id="GO:0005801">
    <property type="term" value="C:cis-Golgi network"/>
    <property type="evidence" value="ECO:0007669"/>
    <property type="project" value="EnsemblFungi"/>
</dbReference>
<dbReference type="GO" id="GO:0030127">
    <property type="term" value="C:COPII vesicle coat"/>
    <property type="evidence" value="ECO:0000318"/>
    <property type="project" value="GO_Central"/>
</dbReference>
<dbReference type="GO" id="GO:0070971">
    <property type="term" value="C:endoplasmic reticulum exit site"/>
    <property type="evidence" value="ECO:0000318"/>
    <property type="project" value="GO_Central"/>
</dbReference>
<dbReference type="GO" id="GO:0005789">
    <property type="term" value="C:endoplasmic reticulum membrane"/>
    <property type="evidence" value="ECO:0007669"/>
    <property type="project" value="UniProtKB-SubCell"/>
</dbReference>
<dbReference type="GO" id="GO:1990753">
    <property type="term" value="C:equatorial cell cortex"/>
    <property type="evidence" value="ECO:0007669"/>
    <property type="project" value="EnsemblFungi"/>
</dbReference>
<dbReference type="GO" id="GO:0000139">
    <property type="term" value="C:Golgi membrane"/>
    <property type="evidence" value="ECO:0007669"/>
    <property type="project" value="UniProtKB-SubCell"/>
</dbReference>
<dbReference type="GO" id="GO:0000149">
    <property type="term" value="F:SNARE binding"/>
    <property type="evidence" value="ECO:0000318"/>
    <property type="project" value="GO_Central"/>
</dbReference>
<dbReference type="GO" id="GO:0008270">
    <property type="term" value="F:zinc ion binding"/>
    <property type="evidence" value="ECO:0000318"/>
    <property type="project" value="GO_Central"/>
</dbReference>
<dbReference type="GO" id="GO:0090110">
    <property type="term" value="P:COPII-coated vesicle cargo loading"/>
    <property type="evidence" value="ECO:0000318"/>
    <property type="project" value="GO_Central"/>
</dbReference>
<dbReference type="GO" id="GO:0006886">
    <property type="term" value="P:intracellular protein transport"/>
    <property type="evidence" value="ECO:0007669"/>
    <property type="project" value="InterPro"/>
</dbReference>
<dbReference type="CDD" id="cd01479">
    <property type="entry name" value="Sec24-like"/>
    <property type="match status" value="1"/>
</dbReference>
<dbReference type="Gene3D" id="2.60.40.1670">
    <property type="entry name" value="beta-sandwich domain of Sec23/24"/>
    <property type="match status" value="1"/>
</dbReference>
<dbReference type="Gene3D" id="1.20.120.730">
    <property type="entry name" value="Sec23/Sec24 helical domain"/>
    <property type="match status" value="1"/>
</dbReference>
<dbReference type="Gene3D" id="3.40.20.10">
    <property type="entry name" value="Severin"/>
    <property type="match status" value="1"/>
</dbReference>
<dbReference type="Gene3D" id="3.40.50.410">
    <property type="entry name" value="von Willebrand factor, type A domain"/>
    <property type="match status" value="1"/>
</dbReference>
<dbReference type="Gene3D" id="2.30.30.380">
    <property type="entry name" value="Zn-finger domain of Sec23/24"/>
    <property type="match status" value="1"/>
</dbReference>
<dbReference type="InterPro" id="IPR029006">
    <property type="entry name" value="ADF-H/Gelsolin-like_dom_sf"/>
</dbReference>
<dbReference type="InterPro" id="IPR007123">
    <property type="entry name" value="Gelsolin-like_dom"/>
</dbReference>
<dbReference type="InterPro" id="IPR036180">
    <property type="entry name" value="Gelsolin-like_dom_sf"/>
</dbReference>
<dbReference type="InterPro" id="IPR006900">
    <property type="entry name" value="Sec23/24_helical_dom"/>
</dbReference>
<dbReference type="InterPro" id="IPR036175">
    <property type="entry name" value="Sec23/24_helical_dom_sf"/>
</dbReference>
<dbReference type="InterPro" id="IPR006896">
    <property type="entry name" value="Sec23/24_trunk_dom"/>
</dbReference>
<dbReference type="InterPro" id="IPR012990">
    <property type="entry name" value="Sec23_24_beta_S"/>
</dbReference>
<dbReference type="InterPro" id="IPR050550">
    <property type="entry name" value="SEC23_SEC24_subfamily"/>
</dbReference>
<dbReference type="InterPro" id="IPR041742">
    <property type="entry name" value="Sec24-like_trunk_dom"/>
</dbReference>
<dbReference type="InterPro" id="IPR036465">
    <property type="entry name" value="vWFA_dom_sf"/>
</dbReference>
<dbReference type="InterPro" id="IPR006895">
    <property type="entry name" value="Znf_Sec23_Sec24"/>
</dbReference>
<dbReference type="InterPro" id="IPR036174">
    <property type="entry name" value="Znf_Sec23_Sec24_sf"/>
</dbReference>
<dbReference type="PANTHER" id="PTHR13803">
    <property type="entry name" value="SEC24-RELATED PROTEIN"/>
    <property type="match status" value="1"/>
</dbReference>
<dbReference type="PANTHER" id="PTHR13803:SF39">
    <property type="entry name" value="SECRETORY 24AB, ISOFORM A"/>
    <property type="match status" value="1"/>
</dbReference>
<dbReference type="Pfam" id="PF00626">
    <property type="entry name" value="Gelsolin"/>
    <property type="match status" value="1"/>
</dbReference>
<dbReference type="Pfam" id="PF08033">
    <property type="entry name" value="Sec23_BS"/>
    <property type="match status" value="1"/>
</dbReference>
<dbReference type="Pfam" id="PF04815">
    <property type="entry name" value="Sec23_helical"/>
    <property type="match status" value="1"/>
</dbReference>
<dbReference type="Pfam" id="PF04811">
    <property type="entry name" value="Sec23_trunk"/>
    <property type="match status" value="1"/>
</dbReference>
<dbReference type="Pfam" id="PF04810">
    <property type="entry name" value="zf-Sec23_Sec24"/>
    <property type="match status" value="1"/>
</dbReference>
<dbReference type="SUPFAM" id="SSF81995">
    <property type="entry name" value="beta-sandwich domain of Sec23/24"/>
    <property type="match status" value="1"/>
</dbReference>
<dbReference type="SUPFAM" id="SSF82754">
    <property type="entry name" value="C-terminal, gelsolin-like domain of Sec23/24"/>
    <property type="match status" value="1"/>
</dbReference>
<dbReference type="SUPFAM" id="SSF81811">
    <property type="entry name" value="Helical domain of Sec23/24"/>
    <property type="match status" value="1"/>
</dbReference>
<dbReference type="SUPFAM" id="SSF53300">
    <property type="entry name" value="vWA-like"/>
    <property type="match status" value="1"/>
</dbReference>
<dbReference type="SUPFAM" id="SSF82919">
    <property type="entry name" value="Zn-finger domain of Sec23/24"/>
    <property type="match status" value="1"/>
</dbReference>
<sequence>MAAPPPNDGYGQYPPQQYGEQPQYPVEPAQQAYGSPASPPPAAASQHGAEHGKKKKRAYAAQAFEVATGGNAVVGGQPAATQYGIPQPAAPGFGGYPAQDAQQVAYGAPTTPYGAPQPAVPGVGGYQAPDPYYSQGVPPAAVGPAPGGVAGITAGIQSMGFGGQPQQPQQLPAQTRGLVNQLYPTDLLNQPFNVAELELPPPPIILPPNSSVTPSPDANCAPKYVRSTLNAVPTTHSLLKKSKLPFALVIQPYAALHDLDDPVPVVQDQVISRCRRCRSYINPFVTFLDHGHRWRCNMCNLTNDVPQAFDWDAAAQKSVDRWQRPELNHAVVEFVAPQEYMVRPPQPLVYLFLFDVSYAAVSTGLLATSARTILDSLDRIPNADRRTRLGFIAVDSSLHYFSVPRDTEENGETSMLVVSDLDEPFLPVPGELLVPLTECRQNIESFLNKLPEMFANNQSNGNCMGSALRAGHKLIAPLGGKIVVLSSSLPNVGYGKLEMREDKKLLGTSKESGLLQTANSFYKSFAVECSKNQVSIDMFLFSSQYQDVASLSNLPRYTGGQTWFYPGWNAARAEDAVKFASEFSDYLSSEIGLEAVLRVRATTGLRMSTFYGNFFNRSSDLCAFPAFPRDQCYVVEVAIDENLTKNFVCLQTAVLHTTCNGERRIRVMTLALPTTTNLADVYASADQCAIATYFSHKAVEKALGNSLDAARDLPQQKLTELLQTFRKELGGGSMGGGLQFPSNLRGLPALCLGLTKHVGLRKSALIPSDIRSAALCQLSTLPLPLLMQYIYPRLYSLHDMPDNAGIPDPETSQIVLPPPMNLSSERFVPFGLYLIDDGQTQFLWVGRDAVPQLILDVFGVQERTQVAVGKGTLPELDNDFNERVRNVIAKSRDHKSKGVGSITLPHLYIVREDGEPSLKLWAQTLLVEDRADQGMSFQQWMGMLREKVVQ</sequence>
<name>SEC24_NEUCR</name>
<reference key="1">
    <citation type="journal article" date="2003" name="Nature">
        <title>The genome sequence of the filamentous fungus Neurospora crassa.</title>
        <authorList>
            <person name="Galagan J.E."/>
            <person name="Calvo S.E."/>
            <person name="Borkovich K.A."/>
            <person name="Selker E.U."/>
            <person name="Read N.D."/>
            <person name="Jaffe D.B."/>
            <person name="FitzHugh W."/>
            <person name="Ma L.-J."/>
            <person name="Smirnov S."/>
            <person name="Purcell S."/>
            <person name="Rehman B."/>
            <person name="Elkins T."/>
            <person name="Engels R."/>
            <person name="Wang S."/>
            <person name="Nielsen C.B."/>
            <person name="Butler J."/>
            <person name="Endrizzi M."/>
            <person name="Qui D."/>
            <person name="Ianakiev P."/>
            <person name="Bell-Pedersen D."/>
            <person name="Nelson M.A."/>
            <person name="Werner-Washburne M."/>
            <person name="Selitrennikoff C.P."/>
            <person name="Kinsey J.A."/>
            <person name="Braun E.L."/>
            <person name="Zelter A."/>
            <person name="Schulte U."/>
            <person name="Kothe G.O."/>
            <person name="Jedd G."/>
            <person name="Mewes H.-W."/>
            <person name="Staben C."/>
            <person name="Marcotte E."/>
            <person name="Greenberg D."/>
            <person name="Roy A."/>
            <person name="Foley K."/>
            <person name="Naylor J."/>
            <person name="Stange-Thomann N."/>
            <person name="Barrett R."/>
            <person name="Gnerre S."/>
            <person name="Kamal M."/>
            <person name="Kamvysselis M."/>
            <person name="Mauceli E.W."/>
            <person name="Bielke C."/>
            <person name="Rudd S."/>
            <person name="Frishman D."/>
            <person name="Krystofova S."/>
            <person name="Rasmussen C."/>
            <person name="Metzenberg R.L."/>
            <person name="Perkins D.D."/>
            <person name="Kroken S."/>
            <person name="Cogoni C."/>
            <person name="Macino G."/>
            <person name="Catcheside D.E.A."/>
            <person name="Li W."/>
            <person name="Pratt R.J."/>
            <person name="Osmani S.A."/>
            <person name="DeSouza C.P.C."/>
            <person name="Glass N.L."/>
            <person name="Orbach M.J."/>
            <person name="Berglund J.A."/>
            <person name="Voelker R."/>
            <person name="Yarden O."/>
            <person name="Plamann M."/>
            <person name="Seiler S."/>
            <person name="Dunlap J.C."/>
            <person name="Radford A."/>
            <person name="Aramayo R."/>
            <person name="Natvig D.O."/>
            <person name="Alex L.A."/>
            <person name="Mannhaupt G."/>
            <person name="Ebbole D.J."/>
            <person name="Freitag M."/>
            <person name="Paulsen I."/>
            <person name="Sachs M.S."/>
            <person name="Lander E.S."/>
            <person name="Nusbaum C."/>
            <person name="Birren B.W."/>
        </authorList>
    </citation>
    <scope>NUCLEOTIDE SEQUENCE [LARGE SCALE GENOMIC DNA]</scope>
    <source>
        <strain>ATCC 24698 / 74-OR23-1A / CBS 708.71 / DSM 1257 / FGSC 987</strain>
    </source>
</reference>
<feature type="chain" id="PRO_0000295493" description="Protein transport protein sec24">
    <location>
        <begin position="1"/>
        <end position="950"/>
    </location>
</feature>
<feature type="region of interest" description="Disordered" evidence="2">
    <location>
        <begin position="1"/>
        <end position="58"/>
    </location>
</feature>
<feature type="region of interest" description="Zinc finger-like">
    <location>
        <begin position="274"/>
        <end position="299"/>
    </location>
</feature>
<feature type="compositionally biased region" description="Low complexity" evidence="2">
    <location>
        <begin position="8"/>
        <end position="36"/>
    </location>
</feature>
<feature type="binding site" evidence="1">
    <location>
        <position position="274"/>
    </location>
    <ligand>
        <name>Zn(2+)</name>
        <dbReference type="ChEBI" id="CHEBI:29105"/>
    </ligand>
</feature>
<feature type="binding site" evidence="1">
    <location>
        <position position="277"/>
    </location>
    <ligand>
        <name>Zn(2+)</name>
        <dbReference type="ChEBI" id="CHEBI:29105"/>
    </ligand>
</feature>
<feature type="binding site" evidence="1">
    <location>
        <position position="296"/>
    </location>
    <ligand>
        <name>Zn(2+)</name>
        <dbReference type="ChEBI" id="CHEBI:29105"/>
    </ligand>
</feature>
<feature type="binding site" evidence="1">
    <location>
        <position position="299"/>
    </location>
    <ligand>
        <name>Zn(2+)</name>
        <dbReference type="ChEBI" id="CHEBI:29105"/>
    </ligand>
</feature>
<comment type="function">
    <text evidence="1">Component of the coat protein complex II (COPII) which promotes the formation of transport vesicles from the endoplasmic reticulum (ER). The coat has two main functions, the physical deformation of the endoplasmic reticulum membrane into vesicles and the selection of cargo molecules (By similarity).</text>
</comment>
<comment type="subunit">
    <text evidence="1">The COPII coat is composed of at least 5 proteins: the sec23/24 complex, the sec13/31 complex, and the protein vtr-7/sar1.</text>
</comment>
<comment type="subcellular location">
    <subcellularLocation>
        <location evidence="1">Cytoplasm</location>
    </subcellularLocation>
    <subcellularLocation>
        <location evidence="1">Cytoplasmic vesicle</location>
        <location evidence="1">COPII-coated vesicle membrane</location>
        <topology evidence="1">Peripheral membrane protein</topology>
        <orientation evidence="1">Cytoplasmic side</orientation>
    </subcellularLocation>
    <subcellularLocation>
        <location evidence="1">Endoplasmic reticulum membrane</location>
        <topology evidence="1">Peripheral membrane protein</topology>
        <orientation evidence="1">Cytoplasmic side</orientation>
    </subcellularLocation>
    <subcellularLocation>
        <location evidence="1">Golgi apparatus membrane</location>
        <topology evidence="1">Peripheral membrane protein</topology>
        <orientation evidence="1">Cytoplasmic side</orientation>
    </subcellularLocation>
</comment>
<comment type="similarity">
    <text evidence="3">Belongs to the SEC23/SEC24 family. SEC24 subfamily.</text>
</comment>
<gene>
    <name type="primary">sec24</name>
    <name type="ORF">NCU02391</name>
</gene>
<evidence type="ECO:0000250" key="1"/>
<evidence type="ECO:0000256" key="2">
    <source>
        <dbReference type="SAM" id="MobiDB-lite"/>
    </source>
</evidence>
<evidence type="ECO:0000305" key="3"/>
<organism>
    <name type="scientific">Neurospora crassa (strain ATCC 24698 / 74-OR23-1A / CBS 708.71 / DSM 1257 / FGSC 987)</name>
    <dbReference type="NCBI Taxonomy" id="367110"/>
    <lineage>
        <taxon>Eukaryota</taxon>
        <taxon>Fungi</taxon>
        <taxon>Dikarya</taxon>
        <taxon>Ascomycota</taxon>
        <taxon>Pezizomycotina</taxon>
        <taxon>Sordariomycetes</taxon>
        <taxon>Sordariomycetidae</taxon>
        <taxon>Sordariales</taxon>
        <taxon>Sordariaceae</taxon>
        <taxon>Neurospora</taxon>
    </lineage>
</organism>
<protein>
    <recommendedName>
        <fullName>Protein transport protein sec24</fullName>
    </recommendedName>
</protein>
<proteinExistence type="inferred from homology"/>
<accession>Q7S4P3</accession>